<gene>
    <name type="primary">Myl10</name>
    <name type="synonym">Mylc2pl</name>
    <name type="synonym">Plrlc</name>
</gene>
<dbReference type="EMBL" id="X65979">
    <property type="protein sequence ID" value="CAA46794.1"/>
    <property type="status" value="ALT_INIT"/>
    <property type="molecule type" value="mRNA"/>
</dbReference>
<dbReference type="EMBL" id="X65981">
    <property type="protein sequence ID" value="CAA46796.1"/>
    <property type="status" value="ALT_SEQ"/>
    <property type="molecule type" value="mRNA"/>
</dbReference>
<dbReference type="EMBL" id="BC125528">
    <property type="status" value="NOT_ANNOTATED_CDS"/>
    <property type="molecule type" value="mRNA"/>
</dbReference>
<dbReference type="CCDS" id="CCDS80434.1">
    <molecule id="Q62082-3"/>
</dbReference>
<dbReference type="PIR" id="S20990">
    <property type="entry name" value="S20990"/>
</dbReference>
<dbReference type="PIR" id="S20992">
    <property type="entry name" value="S20992"/>
</dbReference>
<dbReference type="RefSeq" id="NP_001078856.1">
    <molecule id="Q62082-3"/>
    <property type="nucleotide sequence ID" value="NM_001085387.2"/>
</dbReference>
<dbReference type="RefSeq" id="NP_001289950.1">
    <molecule id="Q62082-3"/>
    <property type="nucleotide sequence ID" value="NM_001303021.1"/>
</dbReference>
<dbReference type="SMR" id="Q62082"/>
<dbReference type="BioGRID" id="208548">
    <property type="interactions" value="1"/>
</dbReference>
<dbReference type="FunCoup" id="Q62082">
    <property type="interactions" value="353"/>
</dbReference>
<dbReference type="STRING" id="10090.ENSMUSP00000005611"/>
<dbReference type="iPTMnet" id="Q62082"/>
<dbReference type="PhosphoSitePlus" id="Q62082"/>
<dbReference type="jPOST" id="Q62082"/>
<dbReference type="PaxDb" id="10090-ENSMUSP00000005611"/>
<dbReference type="PeptideAtlas" id="Q62082"/>
<dbReference type="ProteomicsDB" id="286116">
    <molecule id="Q62082-1"/>
</dbReference>
<dbReference type="ProteomicsDB" id="286117">
    <molecule id="Q62082-2"/>
</dbReference>
<dbReference type="ProteomicsDB" id="286118">
    <molecule id="Q62082-3"/>
</dbReference>
<dbReference type="Antibodypedia" id="16757">
    <property type="antibodies" value="31 antibodies from 12 providers"/>
</dbReference>
<dbReference type="DNASU" id="59310"/>
<dbReference type="Ensembl" id="ENSMUST00000196436.5">
    <molecule id="Q62082-3"/>
    <property type="protein sequence ID" value="ENSMUSP00000142495.2"/>
    <property type="gene ID" value="ENSMUSG00000005474.10"/>
</dbReference>
<dbReference type="Ensembl" id="ENSMUST00000197186.2">
    <molecule id="Q62082-3"/>
    <property type="protein sequence ID" value="ENSMUSP00000143165.2"/>
    <property type="gene ID" value="ENSMUSG00000005474.10"/>
</dbReference>
<dbReference type="GeneID" id="59310"/>
<dbReference type="KEGG" id="mmu:59310"/>
<dbReference type="UCSC" id="uc009aau.1">
    <molecule id="Q62082-1"/>
    <property type="organism name" value="mouse"/>
</dbReference>
<dbReference type="UCSC" id="uc012eet.1">
    <molecule id="Q62082-2"/>
    <property type="organism name" value="mouse"/>
</dbReference>
<dbReference type="AGR" id="MGI:1891705"/>
<dbReference type="CTD" id="93408"/>
<dbReference type="MGI" id="MGI:1891705">
    <property type="gene designation" value="Myl10"/>
</dbReference>
<dbReference type="VEuPathDB" id="HostDB:ENSMUSG00000005474"/>
<dbReference type="eggNOG" id="KOG0031">
    <property type="taxonomic scope" value="Eukaryota"/>
</dbReference>
<dbReference type="GeneTree" id="ENSGT00940000161811"/>
<dbReference type="InParanoid" id="Q62082"/>
<dbReference type="OrthoDB" id="429467at2759"/>
<dbReference type="PhylomeDB" id="Q62082"/>
<dbReference type="Reactome" id="R-MMU-445355">
    <property type="pathway name" value="Smooth Muscle Contraction"/>
</dbReference>
<dbReference type="BioGRID-ORCS" id="59310">
    <property type="hits" value="1 hit in 77 CRISPR screens"/>
</dbReference>
<dbReference type="ChiTaRS" id="Myl10">
    <property type="organism name" value="mouse"/>
</dbReference>
<dbReference type="PRO" id="PR:Q62082"/>
<dbReference type="Proteomes" id="UP000000589">
    <property type="component" value="Chromosome 5"/>
</dbReference>
<dbReference type="RNAct" id="Q62082">
    <property type="molecule type" value="protein"/>
</dbReference>
<dbReference type="Bgee" id="ENSMUSG00000005474">
    <property type="expression patterns" value="Expressed in seminiferous tubule of testis and 42 other cell types or tissues"/>
</dbReference>
<dbReference type="ExpressionAtlas" id="Q62082">
    <property type="expression patterns" value="baseline and differential"/>
</dbReference>
<dbReference type="GO" id="GO:0005739">
    <property type="term" value="C:mitochondrion"/>
    <property type="evidence" value="ECO:0007005"/>
    <property type="project" value="MGI"/>
</dbReference>
<dbReference type="GO" id="GO:0005509">
    <property type="term" value="F:calcium ion binding"/>
    <property type="evidence" value="ECO:0007669"/>
    <property type="project" value="InterPro"/>
</dbReference>
<dbReference type="FunFam" id="1.10.238.10:FF:000010">
    <property type="entry name" value="Myosin regulatory light chain 2, atrial isoform"/>
    <property type="match status" value="1"/>
</dbReference>
<dbReference type="FunFam" id="1.10.238.10:FF:000007">
    <property type="entry name" value="Putative myosin regulatory light chain sqh"/>
    <property type="match status" value="1"/>
</dbReference>
<dbReference type="Gene3D" id="1.10.238.10">
    <property type="entry name" value="EF-hand"/>
    <property type="match status" value="2"/>
</dbReference>
<dbReference type="InterPro" id="IPR011992">
    <property type="entry name" value="EF-hand-dom_pair"/>
</dbReference>
<dbReference type="InterPro" id="IPR018247">
    <property type="entry name" value="EF_Hand_1_Ca_BS"/>
</dbReference>
<dbReference type="InterPro" id="IPR002048">
    <property type="entry name" value="EF_hand_dom"/>
</dbReference>
<dbReference type="InterPro" id="IPR050403">
    <property type="entry name" value="Myosin_RLC"/>
</dbReference>
<dbReference type="PANTHER" id="PTHR23049">
    <property type="entry name" value="MYOSIN REGULATORY LIGHT CHAIN 2"/>
    <property type="match status" value="1"/>
</dbReference>
<dbReference type="Pfam" id="PF00036">
    <property type="entry name" value="EF-hand_1"/>
    <property type="match status" value="1"/>
</dbReference>
<dbReference type="SMART" id="SM00054">
    <property type="entry name" value="EFh"/>
    <property type="match status" value="2"/>
</dbReference>
<dbReference type="SUPFAM" id="SSF47473">
    <property type="entry name" value="EF-hand"/>
    <property type="match status" value="1"/>
</dbReference>
<dbReference type="PROSITE" id="PS00018">
    <property type="entry name" value="EF_HAND_1"/>
    <property type="match status" value="1"/>
</dbReference>
<dbReference type="PROSITE" id="PS50222">
    <property type="entry name" value="EF_HAND_2"/>
    <property type="match status" value="3"/>
</dbReference>
<proteinExistence type="evidence at transcript level"/>
<organism>
    <name type="scientific">Mus musculus</name>
    <name type="common">Mouse</name>
    <dbReference type="NCBI Taxonomy" id="10090"/>
    <lineage>
        <taxon>Eukaryota</taxon>
        <taxon>Metazoa</taxon>
        <taxon>Chordata</taxon>
        <taxon>Craniata</taxon>
        <taxon>Vertebrata</taxon>
        <taxon>Euteleostomi</taxon>
        <taxon>Mammalia</taxon>
        <taxon>Eutheria</taxon>
        <taxon>Euarchontoglires</taxon>
        <taxon>Glires</taxon>
        <taxon>Rodentia</taxon>
        <taxon>Myomorpha</taxon>
        <taxon>Muroidea</taxon>
        <taxon>Muridae</taxon>
        <taxon>Murinae</taxon>
        <taxon>Mus</taxon>
        <taxon>Mus</taxon>
    </lineage>
</organism>
<accession>Q62082</accession>
<accession>Q62080</accession>
<protein>
    <recommendedName>
        <fullName>Myosin regulatory light chain 10</fullName>
    </recommendedName>
    <alternativeName>
        <fullName>Myosin light chain 2, lymphocyte-specific</fullName>
    </alternativeName>
    <alternativeName>
        <fullName>Precursor lymphocyte-specific regulatory light chain</fullName>
    </alternativeName>
</protein>
<reference key="1">
    <citation type="journal article" date="1992" name="EMBO J.">
        <title>A novel regulatory myosin light chain gene distinguishes pre-B cell subsets and is IL-7 inducible.</title>
        <authorList>
            <person name="Oltz E.M."/>
            <person name="Yancopoulos G.D."/>
            <person name="Morrow M.A."/>
            <person name="Rolink A."/>
            <person name="Lee G."/>
            <person name="Wong F."/>
            <person name="Kaplan K."/>
            <person name="Gillis S."/>
            <person name="Melchers F."/>
            <person name="Alt F.W."/>
        </authorList>
    </citation>
    <scope>NUCLEOTIDE SEQUENCE [MRNA] (ISOFORMS 2 AND 3)</scope>
    <scope>ALTERNATIVE SPLICING</scope>
    <scope>TISSUE SPECIFICITY</scope>
    <scope>INDUCTION</scope>
    <source>
        <tissue>Pre-B cell</tissue>
    </source>
</reference>
<reference key="2">
    <citation type="journal article" date="2004" name="Genome Res.">
        <title>The status, quality, and expansion of the NIH full-length cDNA project: the Mammalian Gene Collection (MGC).</title>
        <authorList>
            <consortium name="The MGC Project Team"/>
        </authorList>
    </citation>
    <scope>NUCLEOTIDE SEQUENCE [LARGE SCALE MRNA] (ISOFORM 1)</scope>
    <source>
        <tissue>Brain</tissue>
    </source>
</reference>
<sequence>MGQSSLDHGVQGPVAGTGDFGPLKEATATGFISCAQAPRRARKRVEGTASSNVFSMFDQSQIQEFKEAFTIMDQNRDGFIDKEDLRDTFAALGRINVKNEELEAMVKEAPGPINFTVFLTMFGEKLKGTDPEETILHAFKVFDTEGKGFVKADFIKEKLMTQADRFSEEEVKQMFAAFPPDVCGNLDYRNLCYVITHGEEKD</sequence>
<keyword id="KW-0025">Alternative splicing</keyword>
<keyword id="KW-0106">Calcium</keyword>
<keyword id="KW-0479">Metal-binding</keyword>
<keyword id="KW-1185">Reference proteome</keyword>
<keyword id="KW-0677">Repeat</keyword>
<name>MYL10_MOUSE</name>
<feature type="chain" id="PRO_0000322131" description="Myosin regulatory light chain 10">
    <location>
        <begin position="1"/>
        <end position="202"/>
    </location>
</feature>
<feature type="domain" description="EF-hand 1" evidence="1">
    <location>
        <begin position="60"/>
        <end position="95"/>
    </location>
</feature>
<feature type="domain" description="EF-hand 2" evidence="1">
    <location>
        <begin position="130"/>
        <end position="165"/>
    </location>
</feature>
<feature type="domain" description="EF-hand 3" evidence="1">
    <location>
        <begin position="166"/>
        <end position="201"/>
    </location>
</feature>
<feature type="region of interest" description="Disordered" evidence="2">
    <location>
        <begin position="1"/>
        <end position="21"/>
    </location>
</feature>
<feature type="binding site" evidence="1">
    <location>
        <position position="73"/>
    </location>
    <ligand>
        <name>Ca(2+)</name>
        <dbReference type="ChEBI" id="CHEBI:29108"/>
    </ligand>
</feature>
<feature type="binding site" evidence="1">
    <location>
        <position position="75"/>
    </location>
    <ligand>
        <name>Ca(2+)</name>
        <dbReference type="ChEBI" id="CHEBI:29108"/>
    </ligand>
</feature>
<feature type="binding site" evidence="1">
    <location>
        <position position="77"/>
    </location>
    <ligand>
        <name>Ca(2+)</name>
        <dbReference type="ChEBI" id="CHEBI:29108"/>
    </ligand>
</feature>
<feature type="binding site" evidence="1">
    <location>
        <position position="84"/>
    </location>
    <ligand>
        <name>Ca(2+)</name>
        <dbReference type="ChEBI" id="CHEBI:29108"/>
    </ligand>
</feature>
<feature type="splice variant" id="VSP_031873" description="In isoform 3." evidence="4">
    <location>
        <begin position="1"/>
        <end position="71"/>
    </location>
</feature>
<feature type="splice variant" id="VSP_031874" description="In isoform 2." evidence="4">
    <original>TDPEETILHAFKVFDTEGKGFVKADFIKEKLMTQADRFSEEEVKQMFAAFPPDVCGNLDYRNLCYVITHGEEKD</original>
    <variation>SHCAELFYESSRPQSRGPLWGQGREWLAEARTQKRLYCTPSKCLTLKEKALSRLTSLRKSL</variation>
    <location>
        <begin position="129"/>
        <end position="202"/>
    </location>
</feature>
<comment type="subunit">
    <text>Myosin is a hexamer of 2 heavy chains and 4 light chains.</text>
</comment>
<comment type="alternative products">
    <event type="alternative splicing"/>
    <isoform>
        <id>Q62082-1</id>
        <name>1</name>
        <sequence type="displayed"/>
    </isoform>
    <isoform>
        <id>Q62082-2</id>
        <name>2</name>
        <name>PLRLC-C</name>
        <sequence type="described" ref="VSP_031874"/>
    </isoform>
    <isoform>
        <id>Q62082-3</id>
        <name>3</name>
        <sequence type="described" ref="VSP_031873"/>
    </isoform>
    <text>Additional isoforms seem to exist.</text>
</comment>
<comment type="tissue specificity">
    <text evidence="3">Specifically expressed in precursor B- and T-lymphocytes.</text>
</comment>
<comment type="induction">
    <text evidence="3">Up-regulated by interleukin-7.</text>
</comment>
<comment type="miscellaneous">
    <text>This chain binds calcium.</text>
</comment>
<comment type="sequence caution" evidence="5">
    <conflict type="erroneous initiation">
        <sequence resource="EMBL-CDS" id="CAA46794"/>
    </conflict>
</comment>
<comment type="sequence caution" evidence="5">
    <conflict type="erroneous translation">
        <sequence resource="EMBL-CDS" id="CAA46796"/>
    </conflict>
</comment>
<evidence type="ECO:0000255" key="1">
    <source>
        <dbReference type="PROSITE-ProRule" id="PRU00448"/>
    </source>
</evidence>
<evidence type="ECO:0000256" key="2">
    <source>
        <dbReference type="SAM" id="MobiDB-lite"/>
    </source>
</evidence>
<evidence type="ECO:0000269" key="3">
    <source>
    </source>
</evidence>
<evidence type="ECO:0000303" key="4">
    <source>
    </source>
</evidence>
<evidence type="ECO:0000305" key="5"/>